<protein>
    <recommendedName>
        <fullName>Probable sucrose-phosphatase 3</fullName>
        <shortName>OsSPP3</shortName>
        <ecNumber>3.1.3.24</ecNumber>
    </recommendedName>
</protein>
<organism>
    <name type="scientific">Oryza sativa subsp. japonica</name>
    <name type="common">Rice</name>
    <dbReference type="NCBI Taxonomy" id="39947"/>
    <lineage>
        <taxon>Eukaryota</taxon>
        <taxon>Viridiplantae</taxon>
        <taxon>Streptophyta</taxon>
        <taxon>Embryophyta</taxon>
        <taxon>Tracheophyta</taxon>
        <taxon>Spermatophyta</taxon>
        <taxon>Magnoliopsida</taxon>
        <taxon>Liliopsida</taxon>
        <taxon>Poales</taxon>
        <taxon>Poaceae</taxon>
        <taxon>BOP clade</taxon>
        <taxon>Oryzoideae</taxon>
        <taxon>Oryzeae</taxon>
        <taxon>Oryzinae</taxon>
        <taxon>Oryza</taxon>
        <taxon>Oryza sativa</taxon>
    </lineage>
</organism>
<proteinExistence type="inferred from homology"/>
<evidence type="ECO:0000250" key="1"/>
<evidence type="ECO:0000305" key="2"/>
<feature type="chain" id="PRO_0000350619" description="Probable sucrose-phosphatase 3">
    <location>
        <begin position="1"/>
        <end position="409"/>
    </location>
</feature>
<reference key="1">
    <citation type="journal article" date="2005" name="Mol. Genet. Genomics">
        <title>A fine physical map of the rice chromosome 5.</title>
        <authorList>
            <person name="Cheng C.-H."/>
            <person name="Chung M.C."/>
            <person name="Liu S.-M."/>
            <person name="Chen S.-K."/>
            <person name="Kao F.Y."/>
            <person name="Lin S.-J."/>
            <person name="Hsiao S.-H."/>
            <person name="Tseng I.C."/>
            <person name="Hsing Y.-I.C."/>
            <person name="Wu H.-P."/>
            <person name="Chen C.-S."/>
            <person name="Shaw J.-F."/>
            <person name="Wu J."/>
            <person name="Matsumoto T."/>
            <person name="Sasaki T."/>
            <person name="Chen H.-C."/>
            <person name="Chow T.-Y."/>
        </authorList>
    </citation>
    <scope>NUCLEOTIDE SEQUENCE [LARGE SCALE GENOMIC DNA]</scope>
    <source>
        <strain>cv. Nipponbare</strain>
    </source>
</reference>
<reference key="2">
    <citation type="journal article" date="2005" name="Nature">
        <title>The map-based sequence of the rice genome.</title>
        <authorList>
            <consortium name="International rice genome sequencing project (IRGSP)"/>
        </authorList>
    </citation>
    <scope>NUCLEOTIDE SEQUENCE [LARGE SCALE GENOMIC DNA]</scope>
    <source>
        <strain>cv. Nipponbare</strain>
    </source>
</reference>
<reference key="3">
    <citation type="journal article" date="2008" name="Nucleic Acids Res.">
        <title>The rice annotation project database (RAP-DB): 2008 update.</title>
        <authorList>
            <consortium name="The rice annotation project (RAP)"/>
        </authorList>
    </citation>
    <scope>GENOME REANNOTATION</scope>
    <source>
        <strain>cv. Nipponbare</strain>
    </source>
</reference>
<reference key="4">
    <citation type="journal article" date="2013" name="Rice">
        <title>Improvement of the Oryza sativa Nipponbare reference genome using next generation sequence and optical map data.</title>
        <authorList>
            <person name="Kawahara Y."/>
            <person name="de la Bastide M."/>
            <person name="Hamilton J.P."/>
            <person name="Kanamori H."/>
            <person name="McCombie W.R."/>
            <person name="Ouyang S."/>
            <person name="Schwartz D.C."/>
            <person name="Tanaka T."/>
            <person name="Wu J."/>
            <person name="Zhou S."/>
            <person name="Childs K.L."/>
            <person name="Davidson R.M."/>
            <person name="Lin H."/>
            <person name="Quesada-Ocampo L."/>
            <person name="Vaillancourt B."/>
            <person name="Sakai H."/>
            <person name="Lee S.S."/>
            <person name="Kim J."/>
            <person name="Numa H."/>
            <person name="Itoh T."/>
            <person name="Buell C.R."/>
            <person name="Matsumoto T."/>
        </authorList>
    </citation>
    <scope>GENOME REANNOTATION</scope>
    <source>
        <strain>cv. Nipponbare</strain>
    </source>
</reference>
<reference key="5">
    <citation type="journal article" date="2005" name="PLoS Biol.">
        <title>The genomes of Oryza sativa: a history of duplications.</title>
        <authorList>
            <person name="Yu J."/>
            <person name="Wang J."/>
            <person name="Lin W."/>
            <person name="Li S."/>
            <person name="Li H."/>
            <person name="Zhou J."/>
            <person name="Ni P."/>
            <person name="Dong W."/>
            <person name="Hu S."/>
            <person name="Zeng C."/>
            <person name="Zhang J."/>
            <person name="Zhang Y."/>
            <person name="Li R."/>
            <person name="Xu Z."/>
            <person name="Li S."/>
            <person name="Li X."/>
            <person name="Zheng H."/>
            <person name="Cong L."/>
            <person name="Lin L."/>
            <person name="Yin J."/>
            <person name="Geng J."/>
            <person name="Li G."/>
            <person name="Shi J."/>
            <person name="Liu J."/>
            <person name="Lv H."/>
            <person name="Li J."/>
            <person name="Wang J."/>
            <person name="Deng Y."/>
            <person name="Ran L."/>
            <person name="Shi X."/>
            <person name="Wang X."/>
            <person name="Wu Q."/>
            <person name="Li C."/>
            <person name="Ren X."/>
            <person name="Wang J."/>
            <person name="Wang X."/>
            <person name="Li D."/>
            <person name="Liu D."/>
            <person name="Zhang X."/>
            <person name="Ji Z."/>
            <person name="Zhao W."/>
            <person name="Sun Y."/>
            <person name="Zhang Z."/>
            <person name="Bao J."/>
            <person name="Han Y."/>
            <person name="Dong L."/>
            <person name="Ji J."/>
            <person name="Chen P."/>
            <person name="Wu S."/>
            <person name="Liu J."/>
            <person name="Xiao Y."/>
            <person name="Bu D."/>
            <person name="Tan J."/>
            <person name="Yang L."/>
            <person name="Ye C."/>
            <person name="Zhang J."/>
            <person name="Xu J."/>
            <person name="Zhou Y."/>
            <person name="Yu Y."/>
            <person name="Zhang B."/>
            <person name="Zhuang S."/>
            <person name="Wei H."/>
            <person name="Liu B."/>
            <person name="Lei M."/>
            <person name="Yu H."/>
            <person name="Li Y."/>
            <person name="Xu H."/>
            <person name="Wei S."/>
            <person name="He X."/>
            <person name="Fang L."/>
            <person name="Zhang Z."/>
            <person name="Zhang Y."/>
            <person name="Huang X."/>
            <person name="Su Z."/>
            <person name="Tong W."/>
            <person name="Li J."/>
            <person name="Tong Z."/>
            <person name="Li S."/>
            <person name="Ye J."/>
            <person name="Wang L."/>
            <person name="Fang L."/>
            <person name="Lei T."/>
            <person name="Chen C.-S."/>
            <person name="Chen H.-C."/>
            <person name="Xu Z."/>
            <person name="Li H."/>
            <person name="Huang H."/>
            <person name="Zhang F."/>
            <person name="Xu H."/>
            <person name="Li N."/>
            <person name="Zhao C."/>
            <person name="Li S."/>
            <person name="Dong L."/>
            <person name="Huang Y."/>
            <person name="Li L."/>
            <person name="Xi Y."/>
            <person name="Qi Q."/>
            <person name="Li W."/>
            <person name="Zhang B."/>
            <person name="Hu W."/>
            <person name="Zhang Y."/>
            <person name="Tian X."/>
            <person name="Jiao Y."/>
            <person name="Liang X."/>
            <person name="Jin J."/>
            <person name="Gao L."/>
            <person name="Zheng W."/>
            <person name="Hao B."/>
            <person name="Liu S.-M."/>
            <person name="Wang W."/>
            <person name="Yuan L."/>
            <person name="Cao M."/>
            <person name="McDermott J."/>
            <person name="Samudrala R."/>
            <person name="Wang J."/>
            <person name="Wong G.K.-S."/>
            <person name="Yang H."/>
        </authorList>
    </citation>
    <scope>NUCLEOTIDE SEQUENCE [LARGE SCALE GENOMIC DNA]</scope>
    <source>
        <strain>cv. Nipponbare</strain>
    </source>
</reference>
<reference key="6">
    <citation type="journal article" date="2003" name="Gene">
        <title>Sucrose-phosphatase gene families in plants.</title>
        <authorList>
            <person name="Lunn J.E."/>
        </authorList>
    </citation>
    <scope>IDENTIFICATION</scope>
    <scope>GENE FAMILY</scope>
    <scope>NOMENCLATURE</scope>
</reference>
<gene>
    <name type="primary">SPP3</name>
    <name type="ordered locus">Os05g0144900</name>
    <name type="ordered locus">LOC_Os05g05270</name>
    <name type="ORF">OsJ_016337</name>
    <name type="ORF">OSJNBb0015A05.2</name>
</gene>
<dbReference type="EC" id="3.1.3.24"/>
<dbReference type="EMBL" id="AC124142">
    <property type="protein sequence ID" value="AAT93996.1"/>
    <property type="status" value="ALT_SEQ"/>
    <property type="molecule type" value="Genomic_DNA"/>
</dbReference>
<dbReference type="EMBL" id="AP008211">
    <property type="protein sequence ID" value="BAF16542.1"/>
    <property type="status" value="ALT_SEQ"/>
    <property type="molecule type" value="Genomic_DNA"/>
</dbReference>
<dbReference type="EMBL" id="AP014961">
    <property type="status" value="NOT_ANNOTATED_CDS"/>
    <property type="molecule type" value="Genomic_DNA"/>
</dbReference>
<dbReference type="EMBL" id="CM000142">
    <property type="status" value="NOT_ANNOTATED_CDS"/>
    <property type="molecule type" value="Genomic_DNA"/>
</dbReference>
<dbReference type="SMR" id="A3AZW5"/>
<dbReference type="FunCoup" id="A3AZW5">
    <property type="interactions" value="183"/>
</dbReference>
<dbReference type="STRING" id="39947.A3AZW5"/>
<dbReference type="PaxDb" id="39947-A3AZW5"/>
<dbReference type="KEGG" id="dosa:Os05g0144900"/>
<dbReference type="eggNOG" id="ENOG502QTVT">
    <property type="taxonomic scope" value="Eukaryota"/>
</dbReference>
<dbReference type="InParanoid" id="A3AZW5"/>
<dbReference type="PlantReactome" id="R-OSA-1119465">
    <property type="pathway name" value="Sucrose biosynthesis"/>
</dbReference>
<dbReference type="UniPathway" id="UPA00371">
    <property type="reaction ID" value="UER00546"/>
</dbReference>
<dbReference type="Proteomes" id="UP000000763">
    <property type="component" value="Chromosome 5"/>
</dbReference>
<dbReference type="Proteomes" id="UP000007752">
    <property type="component" value="Chromosome 5"/>
</dbReference>
<dbReference type="Proteomes" id="UP000059680">
    <property type="component" value="Chromosome 5"/>
</dbReference>
<dbReference type="GO" id="GO:0000287">
    <property type="term" value="F:magnesium ion binding"/>
    <property type="evidence" value="ECO:0007669"/>
    <property type="project" value="InterPro"/>
</dbReference>
<dbReference type="GO" id="GO:0050307">
    <property type="term" value="F:sucrose-phosphate phosphatase activity"/>
    <property type="evidence" value="ECO:0007669"/>
    <property type="project" value="UniProtKB-EC"/>
</dbReference>
<dbReference type="GO" id="GO:0005986">
    <property type="term" value="P:sucrose biosynthetic process"/>
    <property type="evidence" value="ECO:0007669"/>
    <property type="project" value="UniProtKB-UniPathway"/>
</dbReference>
<dbReference type="CDD" id="cd02605">
    <property type="entry name" value="HAD_SPP"/>
    <property type="match status" value="1"/>
</dbReference>
<dbReference type="Gene3D" id="3.10.450.50">
    <property type="match status" value="1"/>
</dbReference>
<dbReference type="Gene3D" id="3.90.1070.10">
    <property type="match status" value="1"/>
</dbReference>
<dbReference type="Gene3D" id="3.40.50.1000">
    <property type="entry name" value="HAD superfamily/HAD-like"/>
    <property type="match status" value="1"/>
</dbReference>
<dbReference type="InterPro" id="IPR036412">
    <property type="entry name" value="HAD-like_sf"/>
</dbReference>
<dbReference type="InterPro" id="IPR006379">
    <property type="entry name" value="HAD-SF_hydro_IIB"/>
</dbReference>
<dbReference type="InterPro" id="IPR023214">
    <property type="entry name" value="HAD_sf"/>
</dbReference>
<dbReference type="InterPro" id="IPR032710">
    <property type="entry name" value="NTF2-like_dom_sf"/>
</dbReference>
<dbReference type="InterPro" id="IPR006380">
    <property type="entry name" value="SPP-like_dom"/>
</dbReference>
<dbReference type="InterPro" id="IPR013679">
    <property type="entry name" value="SPP_C"/>
</dbReference>
<dbReference type="InterPro" id="IPR051518">
    <property type="entry name" value="Sucrose_Phosphatase"/>
</dbReference>
<dbReference type="InterPro" id="IPR012847">
    <property type="entry name" value="Sucrose_phosphatase_pln/cyn"/>
</dbReference>
<dbReference type="NCBIfam" id="TIGR01484">
    <property type="entry name" value="HAD-SF-IIB"/>
    <property type="match status" value="1"/>
</dbReference>
<dbReference type="NCBIfam" id="TIGR01482">
    <property type="entry name" value="SPP-subfamily"/>
    <property type="match status" value="1"/>
</dbReference>
<dbReference type="NCBIfam" id="TIGR01485">
    <property type="entry name" value="SPP_plant-cyano"/>
    <property type="match status" value="1"/>
</dbReference>
<dbReference type="PANTHER" id="PTHR46521">
    <property type="entry name" value="SUCROSE-PHOSPHATASE 2-RELATED"/>
    <property type="match status" value="1"/>
</dbReference>
<dbReference type="PANTHER" id="PTHR46521:SF2">
    <property type="entry name" value="SUCROSE-PHOSPHATASE 3-RELATED"/>
    <property type="match status" value="1"/>
</dbReference>
<dbReference type="Pfam" id="PF05116">
    <property type="entry name" value="S6PP"/>
    <property type="match status" value="1"/>
</dbReference>
<dbReference type="Pfam" id="PF08472">
    <property type="entry name" value="S6PP_C"/>
    <property type="match status" value="1"/>
</dbReference>
<dbReference type="SFLD" id="SFLDG01140">
    <property type="entry name" value="C2.B:_Phosphomannomutase_and_P"/>
    <property type="match status" value="1"/>
</dbReference>
<dbReference type="SFLD" id="SFLDF00043">
    <property type="entry name" value="sucrose-phosphatase"/>
    <property type="match status" value="1"/>
</dbReference>
<dbReference type="SUPFAM" id="SSF56784">
    <property type="entry name" value="HAD-like"/>
    <property type="match status" value="1"/>
</dbReference>
<dbReference type="SUPFAM" id="SSF54427">
    <property type="entry name" value="NTF2-like"/>
    <property type="match status" value="1"/>
</dbReference>
<accession>A3AZW5</accession>
<accession>Q0DKT1</accession>
<accession>Q6AUI2</accession>
<sequence length="409" mass="45965">MDKLDGSARLMIVSDLDQTMIDHNDPKNLSLLRFQALWESEFSQDSLLVFSTGRSPISYRGLRTQKPLITPDITIMSVGTVIAYGEEMIHDVGWAEFLSNKWDRDIPERSQGPHKVSFFVDKEGAREVMDSLPETLNRRGLDVKIIFSSGEALDVLPQGAGKGQALLYLLKKFNSDGKPPNSTLVCGDSGNDAELFSVPSVHGVMVSNAQEELLQWYEENARGNPMMIHATERCAAGIMQAIGHFNLGPNVSPRDLEFPYPKLDAIKPADVVVKFYVLYEKWRQGEVQKAPFIIQYLKRITHPNGTTIHPSGRECSLHASIDALSSCYADKQGKKFRVWVDRIVASSIGTINWLVRFDKWEMEGNVRYCCLTTLLLTMKPETEDGFEITHIHKTWLEGYSAGNEHACIL</sequence>
<keyword id="KW-0378">Hydrolase</keyword>
<keyword id="KW-0460">Magnesium</keyword>
<keyword id="KW-1185">Reference proteome</keyword>
<name>SPP3_ORYSJ</name>
<comment type="function">
    <text evidence="1">Catalyzes the final step of sucrose synthesis.</text>
</comment>
<comment type="catalytic activity">
    <reaction>
        <text>sucrose 6(F)-phosphate + H2O = sucrose + phosphate</text>
        <dbReference type="Rhea" id="RHEA:19289"/>
        <dbReference type="ChEBI" id="CHEBI:15377"/>
        <dbReference type="ChEBI" id="CHEBI:17992"/>
        <dbReference type="ChEBI" id="CHEBI:43474"/>
        <dbReference type="ChEBI" id="CHEBI:57723"/>
        <dbReference type="EC" id="3.1.3.24"/>
    </reaction>
</comment>
<comment type="cofactor">
    <cofactor evidence="1">
        <name>Mg(2+)</name>
        <dbReference type="ChEBI" id="CHEBI:18420"/>
    </cofactor>
</comment>
<comment type="pathway">
    <text>Glycan biosynthesis; sucrose biosynthesis; sucrose from D-fructose 6-phosphate and UDP-alpha-D-glucose: step 2/2.</text>
</comment>
<comment type="subunit">
    <text evidence="1">Homodimer.</text>
</comment>
<comment type="similarity">
    <text evidence="2">Belongs to the sucrose phosphatase family.</text>
</comment>
<comment type="sequence caution" evidence="2">
    <conflict type="erroneous gene model prediction">
        <sequence resource="EMBL-CDS" id="AAT93996"/>
    </conflict>
</comment>
<comment type="sequence caution" evidence="2">
    <conflict type="erroneous gene model prediction">
        <sequence resource="EMBL-CDS" id="BAF16542"/>
    </conflict>
</comment>